<organism>
    <name type="scientific">Saimiriine herpesvirus 2 (strain 11)</name>
    <name type="common">SaHV-2</name>
    <name type="synonym">Herpesvirus saimiri</name>
    <dbReference type="NCBI Taxonomy" id="10383"/>
    <lineage>
        <taxon>Viruses</taxon>
        <taxon>Duplodnaviria</taxon>
        <taxon>Heunggongvirae</taxon>
        <taxon>Peploviricota</taxon>
        <taxon>Herviviricetes</taxon>
        <taxon>Herpesvirales</taxon>
        <taxon>Orthoherpesviridae</taxon>
        <taxon>Gammaherpesvirinae</taxon>
        <taxon>Rhadinovirus</taxon>
        <taxon>Rhadinovirus saimiriinegamma2</taxon>
        <taxon>Saimiriine herpesvirus 2</taxon>
    </lineage>
</organism>
<keyword id="KW-1035">Host cytoplasm</keyword>
<keyword id="KW-1048">Host nucleus</keyword>
<keyword id="KW-0945">Host-virus interaction</keyword>
<keyword id="KW-0378">Hydrolase</keyword>
<keyword id="KW-1127">Modulation of host ubiquitin pathway by viral deubiquitinase</keyword>
<keyword id="KW-1130">Modulation of host ubiquitin pathway by virus</keyword>
<keyword id="KW-0645">Protease</keyword>
<keyword id="KW-1185">Reference proteome</keyword>
<keyword id="KW-0677">Repeat</keyword>
<keyword id="KW-0788">Thiol protease</keyword>
<keyword id="KW-0833">Ubl conjugation pathway</keyword>
<keyword id="KW-0946">Virion</keyword>
<keyword id="KW-0920">Virion tegument</keyword>
<feature type="chain" id="PRO_0000116039" description="Large tegument protein deneddylase">
    <location>
        <begin position="1"/>
        <end position="2469"/>
    </location>
</feature>
<feature type="domain" description="Peptidase C76" evidence="1">
    <location>
        <begin position="13"/>
        <end position="225"/>
    </location>
</feature>
<feature type="region of interest" description="Deubiquitination activity" evidence="1">
    <location>
        <begin position="1"/>
        <end position="237"/>
    </location>
</feature>
<feature type="region of interest" description="Disordered" evidence="2">
    <location>
        <begin position="244"/>
        <end position="318"/>
    </location>
</feature>
<feature type="region of interest" description="Interaction with inner tegument protein" evidence="1">
    <location>
        <position position="286"/>
    </location>
</feature>
<feature type="region of interest" description="Disordered" evidence="2">
    <location>
        <begin position="346"/>
        <end position="377"/>
    </location>
</feature>
<feature type="compositionally biased region" description="Pro residues" evidence="2">
    <location>
        <begin position="260"/>
        <end position="271"/>
    </location>
</feature>
<feature type="compositionally biased region" description="Basic residues" evidence="2">
    <location>
        <begin position="295"/>
        <end position="309"/>
    </location>
</feature>
<feature type="compositionally biased region" description="Polar residues" evidence="2">
    <location>
        <begin position="352"/>
        <end position="365"/>
    </location>
</feature>
<feature type="active site" evidence="1">
    <location>
        <position position="33"/>
    </location>
</feature>
<feature type="active site" evidence="1">
    <location>
        <position position="163"/>
    </location>
</feature>
<feature type="active site" evidence="1">
    <location>
        <position position="165"/>
    </location>
</feature>
<feature type="site" description="Important for catalytic activity" evidence="1">
    <location>
        <position position="20"/>
    </location>
</feature>
<sequence>MDIHPLFKKLNLEGIASTHQADEKYGQYAGSQCLSNCVMFLVSSYYNDETPVTSLHGLNEILKYGAKIDFILRRSGQLGHNQYAQLHHIPGYIAGPKWACFIYQSIEMFGMLGHESPINEPFVASLKSLLSKNYNTTVQYFLAICNSKSMGILIKDKKIFIFDPHSCPLVPNSPAHVFSTSNVNDAIEYLSPPNVQYTGSFLYFVPKEYIGHSHYIMNHYRVINYEKLHGPNIDLTSQEGLIIEISPPNTPKPTSTQKPPKTPRTPKPATPKAPKTPRKPKTPKESTIPYDKSKKPPKIPKTSKKSKKVLTKDTALTPQHKTIEEHLRELLPPITETVEDNTLFNHPVERTTPGTDSLLSGINSTTKREDDLEDDDNVTSKLKEDEDDWIDDIPIPEVLDTETTHSDQETIYMIGDENIHDWSYSDDDIDDTLDISFIQLDNLITSLDNIPKNNTFPRIIDKTSNQPIKEGKALHSIDRILKNIVLEHGLITSSSISISKCKSLLQFVILWGEKLSIPTRDLKTILKTELIITEIAEIALTKLTNDTFRNNVITKLNKCMLKLKSESVDSYKHLSALLNNIILKIQTIDTEIELKTLSTVFTSELGKDFSVVCTKKESETIMAAIKNLKEKISTRKQELHTEENYFQSVLIAMETFQPIPLPTRVIEIQPSKKAQQLHEKSKLVEQKLTIDANNVLTDLLHTMKQDKTDISPAPDFTTVLKNIQSTLQLLQTCVTDLNIDKKFISNTVQQLSYIGWEVAELSHSQWNFPKADPVIPLKILDDIKKEIQQVTTKQKNEETLSKILADVQTLLENAKQSDTLSIPILQHYITKAGTLVGERENQKFESLKNTVQKLSTSEEFLKTLIDSTTLENVQLQIQEISDILQSNQYIHQSETIKQAFFDKSNTIINNILQLINQQKYTTVTQPMLIAVKRFLSEAKFRESNTICEIISTLVSLGSLLSKSTTVEALKDALKSIDTLKEKLTAVDRPLKRELYNVIRKLQKQLKTLLEQQEFDNWKMEVDSFVPTPSRDVKTFIQNAPSMKAKQYAKKALKDQIQAMEIDVDPESVIEDNIKANGQKAWQKIQSAFQDLNFSILIPDDWLSLAKEYTRPKSTLFTVIGPILLKFVEEVLESVKNLKEAKLKSLLPNGPVFTPPKFDWIHYYESNVNFHLKTINLPKVSTVAHNIGHELSLLSQALNSKTLPEAVVGTSLEQHAAKFSCMFKTLEATWHDHQVDTRTKIDEYIEDLRNDTKKHIVAPQIQSPNRFLSPEDIQEINSLPKLFRDSLLENESRLLASQKNEFQMLENTVKAAELQYKATQEDIISNMSEAINSLLPLAPAYILAIPTIPTDPLKYVENIIQDKRLLNTEPYQITIECLNWLNTACKTLLSICPKSQKQRLVVLDQSINTHLNITQQFYNLEKTANTTDDLSVLQNAISTLDLKRVQGGKATVDSWQSKLQQMKAMLDNISKSAQTLASLDILWGTALTSVSTAHLGELLQKADPLQKDIESLSSTNTDLLSRVTELIHFIKFKRGFLSYYEEGQKEVFQRYPLTQNIRPSQPTEINNLLRLALFVLLKNKDASAWIWTETLPLVDSNKLAYVPPNKGPLYTCSQYLKLLEAQLLDPSLSKVILSDNRPLAGIAQARLGIDSTVLLARAFPDIQKHAEEVLTAYKNSIVSHTQNEFMAMTIVCHMIKIIMNDFYPQNFNINTVPIYVNHTKLLQIILTMWPRLIKASLCQQSFQEATSLLQTTLKPLFLKITDLTLENNIYNPASHCSDALLFFPQKWKSINIQSIMWEHPSFLAICKNKSRARITFLALAFKIIDPTILNQLWTSLNPANTSDSTSYSLLLNHLVATEFDKNVPSTFLEPGNPSLAYAYGTQTGNIIGTKSYVPQKSPPISVTAFEIALGALIFQVPVKLFVTDKTPVLSSPELGDMLIVSELLDCTGTTEPFKTMIEAPKSSLSTNLNKQYVSPPHELEVFSRQASWLQHILSSSNFKNNIVATIDYSTTFLNAYVVPEKLPFKQESFCFIPKIDSLQWPNNTFTTFLPLVEMPSNIELHYAKVTEPFNKTVLSTMFNVFPTHILPTQEEHDQSISSKSPTFKIEHDYNTNSVYNNHINNINLTNNSTYHQYKDVLPQPLADKLSYEPKDLQNLASTTEPQIEDIFSELSIKETDNTAKAPLLYPQKQPKTKKFLSPVHTKHKTSNSIIFEENTTVKVQPNTCIQHSDLHKDTNTPRQQISNAPCFIPNHKVPVIIKPSQEKLKANTVHTNTDDLSPKKPQILIANNNNIFKQSDKQHKHQYTQISKPKIFINQDSNNPIKQPHHNPPQPLIKPTDPQQLTLSNDIISSDQTTKNLNVQRKPIIVIPNNNYALNQVQKLSNLPSIKTKPYITLKDIQSNSKTLYDESPITIPILEHLDIEPIVSISYLEKRVDETKFIILEFIKHTKQNIIKTTNLLIHQIMKIKTLYL</sequence>
<reference key="1">
    <citation type="journal article" date="1992" name="J. Virol.">
        <title>Primary structure of the herpesvirus saimiri genome.</title>
        <authorList>
            <person name="Albrecht J.-C."/>
            <person name="Nicholas J."/>
            <person name="Biller D."/>
            <person name="Cameron K.R."/>
            <person name="Biesinger B."/>
            <person name="Newman C."/>
            <person name="Wittmann S."/>
            <person name="Craxton M.A."/>
            <person name="Coleman H."/>
            <person name="Fleckenstein B."/>
            <person name="Honess R.W."/>
        </authorList>
    </citation>
    <scope>NUCLEOTIDE SEQUENCE [LARGE SCALE GENOMIC DNA]</scope>
</reference>
<reference key="2">
    <citation type="journal article" date="1992" name="Virology">
        <title>Analysis of nucleotide sequence of the rightmost 43 kbp of herpesvirus saimiri (HVS) L-DNA: general conservation of genetic organization between HVS and Epstein-Barr virus.</title>
        <authorList>
            <person name="Nicholas J."/>
            <person name="Cameron K.R."/>
            <person name="Coleman H."/>
            <person name="Newman C."/>
            <person name="Honess R.W."/>
        </authorList>
    </citation>
    <scope>NUCLEOTIDE SEQUENCE [GENOMIC DNA]</scope>
</reference>
<protein>
    <recommendedName>
        <fullName evidence="1">Large tegument protein deneddylase</fullName>
        <ecNumber evidence="1">3.4.19.12</ecNumber>
        <ecNumber evidence="1">3.4.22.-</ecNumber>
    </recommendedName>
</protein>
<accession>Q01056</accession>
<comment type="function">
    <text evidence="1">Large tegument protein that plays multiple roles in the viral cycle. During viral entry, remains associated with the capsid while most of the tegument is detached and participates in the capsid transport toward the host nucleus. Plays a role in the routing of the capsid at the nuclear pore complex and subsequent uncoating. Within the host nucleus, acts as a deneddylase and promotes the degradation of nuclear CRLs (cullin-RING ubiquitin ligases) and thereby stabilizes nuclear CRL substrates, while cytoplasmic CRLs remain unaffected. These modifications prevent host cell cycle S-phase progression and create a favorable environment allowing efficient viral genome replication. Participates later in the secondary envelopment of capsids. Indeed, plays a linker role for the association of the outer viral tegument to the capsids together with the inner tegument protein.</text>
</comment>
<comment type="catalytic activity">
    <reaction evidence="1">
        <text>Thiol-dependent hydrolysis of ester, thioester, amide, peptide and isopeptide bonds formed by the C-terminal Gly of ubiquitin (a 76-residue protein attached to proteins as an intracellular targeting signal).</text>
        <dbReference type="EC" id="3.4.19.12"/>
    </reaction>
</comment>
<comment type="subunit">
    <text evidence="1">Interacts with host CUL1 and CUL4A; these interactions inhibit the E3 ligase activity of cullins. Interacts with inner tegument protein. Interacts with capsid vertex specific component CVC2. Interacts with the major capsid protein/MCP.</text>
</comment>
<comment type="subcellular location">
    <subcellularLocation>
        <location evidence="1">Virion tegument</location>
    </subcellularLocation>
    <subcellularLocation>
        <location evidence="1">Host cytoplasm</location>
    </subcellularLocation>
    <subcellularLocation>
        <location evidence="1">Host nucleus</location>
    </subcellularLocation>
    <text evidence="1">Tightly associated with the capsid.</text>
</comment>
<comment type="similarity">
    <text evidence="1">Belongs to the herpesviridae large tegument protein family.</text>
</comment>
<gene>
    <name type="primary">64</name>
    <name type="synonym">EERF2</name>
</gene>
<proteinExistence type="inferred from homology"/>
<evidence type="ECO:0000255" key="1">
    <source>
        <dbReference type="HAMAP-Rule" id="MF_04044"/>
    </source>
</evidence>
<evidence type="ECO:0000256" key="2">
    <source>
        <dbReference type="SAM" id="MobiDB-lite"/>
    </source>
</evidence>
<organismHost>
    <name type="scientific">Saimiri sciureus</name>
    <name type="common">Common squirrel monkey</name>
    <dbReference type="NCBI Taxonomy" id="9521"/>
</organismHost>
<name>LTP_SHV21</name>
<dbReference type="EC" id="3.4.19.12" evidence="1"/>
<dbReference type="EC" id="3.4.22.-" evidence="1"/>
<dbReference type="EMBL" id="X64346">
    <property type="protein sequence ID" value="CAA45687.1"/>
    <property type="molecule type" value="Genomic_DNA"/>
</dbReference>
<dbReference type="EMBL" id="M86409">
    <property type="protein sequence ID" value="AAA46140.1"/>
    <property type="molecule type" value="Genomic_DNA"/>
</dbReference>
<dbReference type="RefSeq" id="NP_040266.1">
    <property type="nucleotide sequence ID" value="NC_001350.1"/>
</dbReference>
<dbReference type="SMR" id="Q01056"/>
<dbReference type="KEGG" id="vg:1682468"/>
<dbReference type="Proteomes" id="UP000000587">
    <property type="component" value="Segment"/>
</dbReference>
<dbReference type="GO" id="GO:0030430">
    <property type="term" value="C:host cell cytoplasm"/>
    <property type="evidence" value="ECO:0007669"/>
    <property type="project" value="UniProtKB-SubCell"/>
</dbReference>
<dbReference type="GO" id="GO:0042025">
    <property type="term" value="C:host cell nucleus"/>
    <property type="evidence" value="ECO:0007669"/>
    <property type="project" value="UniProtKB-SubCell"/>
</dbReference>
<dbReference type="GO" id="GO:0019033">
    <property type="term" value="C:viral tegument"/>
    <property type="evidence" value="ECO:0007669"/>
    <property type="project" value="UniProtKB-SubCell"/>
</dbReference>
<dbReference type="GO" id="GO:0004843">
    <property type="term" value="F:cysteine-type deubiquitinase activity"/>
    <property type="evidence" value="ECO:0007669"/>
    <property type="project" value="UniProtKB-EC"/>
</dbReference>
<dbReference type="GO" id="GO:0006508">
    <property type="term" value="P:proteolysis"/>
    <property type="evidence" value="ECO:0007669"/>
    <property type="project" value="UniProtKB-KW"/>
</dbReference>
<dbReference type="GO" id="GO:0039648">
    <property type="term" value="P:symbiont-mediated perturbation of host ubiquitin-like protein modification"/>
    <property type="evidence" value="ECO:0007669"/>
    <property type="project" value="UniProtKB-KW"/>
</dbReference>
<dbReference type="Gene3D" id="3.90.70.120">
    <property type="match status" value="1"/>
</dbReference>
<dbReference type="HAMAP" id="MF_04044">
    <property type="entry name" value="HSV_LTP"/>
    <property type="match status" value="1"/>
</dbReference>
<dbReference type="InterPro" id="IPR006928">
    <property type="entry name" value="Herpes_teg_USP"/>
</dbReference>
<dbReference type="InterPro" id="IPR034702">
    <property type="entry name" value="HSV_LTP"/>
</dbReference>
<dbReference type="InterPro" id="IPR038765">
    <property type="entry name" value="Papain-like_cys_pep_sf"/>
</dbReference>
<dbReference type="Pfam" id="PF04843">
    <property type="entry name" value="Herpes_teg_N"/>
    <property type="match status" value="1"/>
</dbReference>
<dbReference type="SUPFAM" id="SSF54001">
    <property type="entry name" value="Cysteine proteinases"/>
    <property type="match status" value="1"/>
</dbReference>
<dbReference type="PROSITE" id="PS51521">
    <property type="entry name" value="HTUSP"/>
    <property type="match status" value="1"/>
</dbReference>